<sequence>MFNWFRRQFGKDNTAPESAPPEGAEVSPELAPEVIQAETESPSEEDSQTTELAAPPPEEPSSDTANPDDYLQWAKAAYQNIQARKAETVSPPESAAAITVEAGIEETAEEIVVAPESDQATATEADLPSPETEITTGPAWLQKSDRLEALKETAVEEATVAGTLTAESMAMDDDFMWSAKVLAAQGRSAADVSAEEIDWLRKLRQGLSKTRVNLVNQLKSIVGQGPLNEAAVEEIEAILLQADVGVEATDYIITTLQDKLREEALPPEQAIEFLKEILRSILDRPLLSLPSAEFAPEAEGLNVWLLTGVNGAGKTTTIGKLAFMAKQSGYDCVIAAADTFRAAAVEQVKVWGERSGVPVIANPGQNTDPAAVVYDGISAAQSRNVNLLLVDTAGRLQNKKNLMDELAKIRRIIDKKAPNATVESLLVLDATLGQNGLRQAEVFAEAAKLSGVVLTKLDGSAKGGVALAVAQQLNLPIRFIGAGEGIEDLRPFSSYEFVEALLNG</sequence>
<feature type="chain" id="PRO_0000101146" description="Signal recognition particle receptor FtsY">
    <location>
        <begin position="1"/>
        <end position="504"/>
    </location>
</feature>
<feature type="region of interest" description="Disordered" evidence="2">
    <location>
        <begin position="1"/>
        <end position="71"/>
    </location>
</feature>
<feature type="region of interest" description="Disordered" evidence="2">
    <location>
        <begin position="116"/>
        <end position="135"/>
    </location>
</feature>
<feature type="binding site" evidence="1">
    <location>
        <begin position="308"/>
        <end position="315"/>
    </location>
    <ligand>
        <name>GTP</name>
        <dbReference type="ChEBI" id="CHEBI:37565"/>
    </ligand>
</feature>
<feature type="binding site" evidence="1">
    <location>
        <begin position="391"/>
        <end position="395"/>
    </location>
    <ligand>
        <name>GTP</name>
        <dbReference type="ChEBI" id="CHEBI:37565"/>
    </ligand>
</feature>
<feature type="binding site" evidence="1">
    <location>
        <begin position="455"/>
        <end position="458"/>
    </location>
    <ligand>
        <name>GTP</name>
        <dbReference type="ChEBI" id="CHEBI:37565"/>
    </ligand>
</feature>
<protein>
    <recommendedName>
        <fullName evidence="1">Signal recognition particle receptor FtsY</fullName>
        <shortName evidence="1">SRP receptor</shortName>
        <ecNumber evidence="1">3.6.5.4</ecNumber>
    </recommendedName>
</protein>
<proteinExistence type="inferred from homology"/>
<reference key="1">
    <citation type="journal article" date="1996" name="DNA Res.">
        <title>Sequence analysis of the genome of the unicellular cyanobacterium Synechocystis sp. strain PCC6803. II. Sequence determination of the entire genome and assignment of potential protein-coding regions.</title>
        <authorList>
            <person name="Kaneko T."/>
            <person name="Sato S."/>
            <person name="Kotani H."/>
            <person name="Tanaka A."/>
            <person name="Asamizu E."/>
            <person name="Nakamura Y."/>
            <person name="Miyajima N."/>
            <person name="Hirosawa M."/>
            <person name="Sugiura M."/>
            <person name="Sasamoto S."/>
            <person name="Kimura T."/>
            <person name="Hosouchi T."/>
            <person name="Matsuno A."/>
            <person name="Muraki A."/>
            <person name="Nakazaki N."/>
            <person name="Naruo K."/>
            <person name="Okumura S."/>
            <person name="Shimpo S."/>
            <person name="Takeuchi C."/>
            <person name="Wada T."/>
            <person name="Watanabe A."/>
            <person name="Yamada M."/>
            <person name="Yasuda M."/>
            <person name="Tabata S."/>
        </authorList>
    </citation>
    <scope>NUCLEOTIDE SEQUENCE [LARGE SCALE GENOMIC DNA]</scope>
    <source>
        <strain>ATCC 27184 / PCC 6803 / Kazusa</strain>
    </source>
</reference>
<name>FTSY_SYNY3</name>
<keyword id="KW-0997">Cell inner membrane</keyword>
<keyword id="KW-1003">Cell membrane</keyword>
<keyword id="KW-0963">Cytoplasm</keyword>
<keyword id="KW-0342">GTP-binding</keyword>
<keyword id="KW-0378">Hydrolase</keyword>
<keyword id="KW-0472">Membrane</keyword>
<keyword id="KW-0547">Nucleotide-binding</keyword>
<keyword id="KW-0675">Receptor</keyword>
<keyword id="KW-1185">Reference proteome</keyword>
<organism>
    <name type="scientific">Synechocystis sp. (strain ATCC 27184 / PCC 6803 / Kazusa)</name>
    <dbReference type="NCBI Taxonomy" id="1111708"/>
    <lineage>
        <taxon>Bacteria</taxon>
        <taxon>Bacillati</taxon>
        <taxon>Cyanobacteriota</taxon>
        <taxon>Cyanophyceae</taxon>
        <taxon>Synechococcales</taxon>
        <taxon>Merismopediaceae</taxon>
        <taxon>Synechocystis</taxon>
    </lineage>
</organism>
<dbReference type="EC" id="3.6.5.4" evidence="1"/>
<dbReference type="EMBL" id="BA000022">
    <property type="protein sequence ID" value="BAA17996.1"/>
    <property type="molecule type" value="Genomic_DNA"/>
</dbReference>
<dbReference type="PIR" id="S75134">
    <property type="entry name" value="S75134"/>
</dbReference>
<dbReference type="SMR" id="P73930"/>
<dbReference type="FunCoup" id="P73930">
    <property type="interactions" value="448"/>
</dbReference>
<dbReference type="IntAct" id="P73930">
    <property type="interactions" value="4"/>
</dbReference>
<dbReference type="STRING" id="1148.gene:10498866"/>
<dbReference type="PaxDb" id="1148-1653079"/>
<dbReference type="EnsemblBacteria" id="BAA17996">
    <property type="protein sequence ID" value="BAA17996"/>
    <property type="gene ID" value="BAA17996"/>
</dbReference>
<dbReference type="KEGG" id="syn:slr2102"/>
<dbReference type="eggNOG" id="COG0552">
    <property type="taxonomic scope" value="Bacteria"/>
</dbReference>
<dbReference type="InParanoid" id="P73930"/>
<dbReference type="PhylomeDB" id="P73930"/>
<dbReference type="Proteomes" id="UP000001425">
    <property type="component" value="Chromosome"/>
</dbReference>
<dbReference type="GO" id="GO:0005737">
    <property type="term" value="C:cytoplasm"/>
    <property type="evidence" value="ECO:0007669"/>
    <property type="project" value="UniProtKB-SubCell"/>
</dbReference>
<dbReference type="GO" id="GO:0005886">
    <property type="term" value="C:plasma membrane"/>
    <property type="evidence" value="ECO:0000318"/>
    <property type="project" value="GO_Central"/>
</dbReference>
<dbReference type="GO" id="GO:0016887">
    <property type="term" value="F:ATP hydrolysis activity"/>
    <property type="evidence" value="ECO:0007669"/>
    <property type="project" value="InterPro"/>
</dbReference>
<dbReference type="GO" id="GO:0005525">
    <property type="term" value="F:GTP binding"/>
    <property type="evidence" value="ECO:0007669"/>
    <property type="project" value="UniProtKB-UniRule"/>
</dbReference>
<dbReference type="GO" id="GO:0003924">
    <property type="term" value="F:GTPase activity"/>
    <property type="evidence" value="ECO:0000318"/>
    <property type="project" value="GO_Central"/>
</dbReference>
<dbReference type="GO" id="GO:0005047">
    <property type="term" value="F:signal recognition particle binding"/>
    <property type="evidence" value="ECO:0000318"/>
    <property type="project" value="GO_Central"/>
</dbReference>
<dbReference type="GO" id="GO:0006605">
    <property type="term" value="P:protein targeting"/>
    <property type="evidence" value="ECO:0000318"/>
    <property type="project" value="GO_Central"/>
</dbReference>
<dbReference type="GO" id="GO:0006614">
    <property type="term" value="P:SRP-dependent cotranslational protein targeting to membrane"/>
    <property type="evidence" value="ECO:0007669"/>
    <property type="project" value="InterPro"/>
</dbReference>
<dbReference type="CDD" id="cd17874">
    <property type="entry name" value="FtsY"/>
    <property type="match status" value="1"/>
</dbReference>
<dbReference type="FunFam" id="1.20.120.140:FF:000002">
    <property type="entry name" value="Signal recognition particle receptor FtsY"/>
    <property type="match status" value="1"/>
</dbReference>
<dbReference type="FunFam" id="3.40.50.300:FF:000053">
    <property type="entry name" value="Signal recognition particle receptor FtsY"/>
    <property type="match status" value="1"/>
</dbReference>
<dbReference type="Gene3D" id="3.40.50.300">
    <property type="entry name" value="P-loop containing nucleotide triphosphate hydrolases"/>
    <property type="match status" value="1"/>
</dbReference>
<dbReference type="Gene3D" id="1.20.120.140">
    <property type="entry name" value="Signal recognition particle SRP54, nucleotide-binding domain"/>
    <property type="match status" value="1"/>
</dbReference>
<dbReference type="HAMAP" id="MF_00920">
    <property type="entry name" value="FtsY"/>
    <property type="match status" value="1"/>
</dbReference>
<dbReference type="InterPro" id="IPR003593">
    <property type="entry name" value="AAA+_ATPase"/>
</dbReference>
<dbReference type="InterPro" id="IPR027417">
    <property type="entry name" value="P-loop_NTPase"/>
</dbReference>
<dbReference type="InterPro" id="IPR013822">
    <property type="entry name" value="Signal_recog_particl_SRP54_hlx"/>
</dbReference>
<dbReference type="InterPro" id="IPR004390">
    <property type="entry name" value="SR_rcpt_FtsY"/>
</dbReference>
<dbReference type="InterPro" id="IPR036225">
    <property type="entry name" value="SRP/SRP_N"/>
</dbReference>
<dbReference type="InterPro" id="IPR000897">
    <property type="entry name" value="SRP54_GTPase_dom"/>
</dbReference>
<dbReference type="InterPro" id="IPR042101">
    <property type="entry name" value="SRP54_N_sf"/>
</dbReference>
<dbReference type="NCBIfam" id="TIGR00064">
    <property type="entry name" value="ftsY"/>
    <property type="match status" value="1"/>
</dbReference>
<dbReference type="PANTHER" id="PTHR43134">
    <property type="entry name" value="SIGNAL RECOGNITION PARTICLE RECEPTOR SUBUNIT ALPHA"/>
    <property type="match status" value="1"/>
</dbReference>
<dbReference type="PANTHER" id="PTHR43134:SF1">
    <property type="entry name" value="SIGNAL RECOGNITION PARTICLE RECEPTOR SUBUNIT ALPHA"/>
    <property type="match status" value="1"/>
</dbReference>
<dbReference type="Pfam" id="PF00448">
    <property type="entry name" value="SRP54"/>
    <property type="match status" value="1"/>
</dbReference>
<dbReference type="Pfam" id="PF02881">
    <property type="entry name" value="SRP54_N"/>
    <property type="match status" value="1"/>
</dbReference>
<dbReference type="SMART" id="SM00382">
    <property type="entry name" value="AAA"/>
    <property type="match status" value="1"/>
</dbReference>
<dbReference type="SMART" id="SM00962">
    <property type="entry name" value="SRP54"/>
    <property type="match status" value="1"/>
</dbReference>
<dbReference type="SMART" id="SM00963">
    <property type="entry name" value="SRP54_N"/>
    <property type="match status" value="1"/>
</dbReference>
<dbReference type="SUPFAM" id="SSF47364">
    <property type="entry name" value="Domain of the SRP/SRP receptor G-proteins"/>
    <property type="match status" value="1"/>
</dbReference>
<dbReference type="SUPFAM" id="SSF52540">
    <property type="entry name" value="P-loop containing nucleoside triphosphate hydrolases"/>
    <property type="match status" value="1"/>
</dbReference>
<dbReference type="PROSITE" id="PS00300">
    <property type="entry name" value="SRP54"/>
    <property type="match status" value="1"/>
</dbReference>
<accession>P73930</accession>
<gene>
    <name evidence="1" type="primary">ftsY</name>
    <name type="ordered locus">slr2102</name>
</gene>
<evidence type="ECO:0000255" key="1">
    <source>
        <dbReference type="HAMAP-Rule" id="MF_00920"/>
    </source>
</evidence>
<evidence type="ECO:0000256" key="2">
    <source>
        <dbReference type="SAM" id="MobiDB-lite"/>
    </source>
</evidence>
<comment type="function">
    <text evidence="1">Involved in targeting and insertion of nascent membrane proteins into the cytoplasmic membrane. Acts as a receptor for the complex formed by the signal recognition particle (SRP) and the ribosome-nascent chain (RNC).</text>
</comment>
<comment type="catalytic activity">
    <reaction evidence="1">
        <text>GTP + H2O = GDP + phosphate + H(+)</text>
        <dbReference type="Rhea" id="RHEA:19669"/>
        <dbReference type="ChEBI" id="CHEBI:15377"/>
        <dbReference type="ChEBI" id="CHEBI:15378"/>
        <dbReference type="ChEBI" id="CHEBI:37565"/>
        <dbReference type="ChEBI" id="CHEBI:43474"/>
        <dbReference type="ChEBI" id="CHEBI:58189"/>
        <dbReference type="EC" id="3.6.5.4"/>
    </reaction>
</comment>
<comment type="subunit">
    <text evidence="1">Part of the signal recognition particle protein translocation system, which is composed of SRP and FtsY.</text>
</comment>
<comment type="subcellular location">
    <subcellularLocation>
        <location>Cell inner membrane</location>
        <topology>Peripheral membrane protein</topology>
        <orientation>Cytoplasmic side</orientation>
    </subcellularLocation>
    <subcellularLocation>
        <location evidence="1">Cytoplasm</location>
    </subcellularLocation>
</comment>
<comment type="similarity">
    <text evidence="1">Belongs to the GTP-binding SRP family. FtsY subfamily.</text>
</comment>